<evidence type="ECO:0000255" key="1">
    <source>
        <dbReference type="HAMAP-Rule" id="MF_00912"/>
    </source>
</evidence>
<evidence type="ECO:0000255" key="2">
    <source>
        <dbReference type="PROSITE-ProRule" id="PRU01115"/>
    </source>
</evidence>
<keyword id="KW-0131">Cell cycle</keyword>
<keyword id="KW-0132">Cell division</keyword>
<keyword id="KW-1003">Cell membrane</keyword>
<keyword id="KW-0472">Membrane</keyword>
<keyword id="KW-1185">Reference proteome</keyword>
<keyword id="KW-0812">Transmembrane</keyword>
<keyword id="KW-1133">Transmembrane helix</keyword>
<proteinExistence type="inferred from homology"/>
<dbReference type="EMBL" id="AL591982">
    <property type="protein sequence ID" value="CAD00112.1"/>
    <property type="molecule type" value="Genomic_DNA"/>
</dbReference>
<dbReference type="PIR" id="AB1329">
    <property type="entry name" value="AB1329"/>
</dbReference>
<dbReference type="RefSeq" id="NP_465558.1">
    <property type="nucleotide sequence ID" value="NC_003210.1"/>
</dbReference>
<dbReference type="RefSeq" id="WP_003724089.1">
    <property type="nucleotide sequence ID" value="NZ_CP149495.1"/>
</dbReference>
<dbReference type="STRING" id="169963.gene:17594719"/>
<dbReference type="PaxDb" id="169963-lmo2034"/>
<dbReference type="EnsemblBacteria" id="CAD00112">
    <property type="protein sequence ID" value="CAD00112"/>
    <property type="gene ID" value="CAD00112"/>
</dbReference>
<dbReference type="GeneID" id="988005"/>
<dbReference type="KEGG" id="lmo:lmo2034"/>
<dbReference type="PATRIC" id="fig|169963.11.peg.2082"/>
<dbReference type="eggNOG" id="COG1589">
    <property type="taxonomic scope" value="Bacteria"/>
</dbReference>
<dbReference type="HOGENOM" id="CLU_046278_2_1_9"/>
<dbReference type="OrthoDB" id="1819027at2"/>
<dbReference type="PhylomeDB" id="Q8Y5M3"/>
<dbReference type="BioCyc" id="LMON169963:LMO2034-MONOMER"/>
<dbReference type="Proteomes" id="UP000000817">
    <property type="component" value="Chromosome"/>
</dbReference>
<dbReference type="GO" id="GO:0032153">
    <property type="term" value="C:cell division site"/>
    <property type="evidence" value="ECO:0007669"/>
    <property type="project" value="UniProtKB-UniRule"/>
</dbReference>
<dbReference type="GO" id="GO:0005886">
    <property type="term" value="C:plasma membrane"/>
    <property type="evidence" value="ECO:0007669"/>
    <property type="project" value="UniProtKB-SubCell"/>
</dbReference>
<dbReference type="GO" id="GO:0043093">
    <property type="term" value="P:FtsZ-dependent cytokinesis"/>
    <property type="evidence" value="ECO:0007669"/>
    <property type="project" value="UniProtKB-UniRule"/>
</dbReference>
<dbReference type="Gene3D" id="3.40.50.10960">
    <property type="match status" value="1"/>
</dbReference>
<dbReference type="HAMAP" id="MF_00912">
    <property type="entry name" value="DivIB"/>
    <property type="match status" value="1"/>
</dbReference>
<dbReference type="InterPro" id="IPR005548">
    <property type="entry name" value="Cell_div_FtsQ/DivIB_C"/>
</dbReference>
<dbReference type="InterPro" id="IPR026580">
    <property type="entry name" value="DivIB"/>
</dbReference>
<dbReference type="InterPro" id="IPR050487">
    <property type="entry name" value="FtsQ_DivIB"/>
</dbReference>
<dbReference type="InterPro" id="IPR034746">
    <property type="entry name" value="POTRA"/>
</dbReference>
<dbReference type="InterPro" id="IPR013685">
    <property type="entry name" value="POTRA_FtsQ_type"/>
</dbReference>
<dbReference type="PANTHER" id="PTHR37820">
    <property type="entry name" value="CELL DIVISION PROTEIN DIVIB"/>
    <property type="match status" value="1"/>
</dbReference>
<dbReference type="PANTHER" id="PTHR37820:SF1">
    <property type="entry name" value="CELL DIVISION PROTEIN FTSQ"/>
    <property type="match status" value="1"/>
</dbReference>
<dbReference type="Pfam" id="PF03799">
    <property type="entry name" value="FtsQ_DivIB_C"/>
    <property type="match status" value="1"/>
</dbReference>
<dbReference type="Pfam" id="PF08478">
    <property type="entry name" value="POTRA_1"/>
    <property type="match status" value="1"/>
</dbReference>
<dbReference type="PROSITE" id="PS51779">
    <property type="entry name" value="POTRA"/>
    <property type="match status" value="1"/>
</dbReference>
<protein>
    <recommendedName>
        <fullName evidence="1">Cell division protein DivIB</fullName>
    </recommendedName>
</protein>
<gene>
    <name evidence="1" type="primary">divIB</name>
    <name type="ordered locus">lmo2034</name>
</gene>
<accession>Q8Y5M3</accession>
<name>DIVIB_LISMO</name>
<feature type="chain" id="PRO_0000414779" description="Cell division protein DivIB">
    <location>
        <begin position="1"/>
        <end position="270"/>
    </location>
</feature>
<feature type="topological domain" description="Cytoplasmic" evidence="1">
    <location>
        <begin position="1"/>
        <end position="28"/>
    </location>
</feature>
<feature type="transmembrane region" description="Helical" evidence="1">
    <location>
        <begin position="29"/>
        <end position="49"/>
    </location>
</feature>
<feature type="topological domain" description="Extracellular" evidence="1">
    <location>
        <begin position="50"/>
        <end position="270"/>
    </location>
</feature>
<feature type="domain" description="POTRA" evidence="2">
    <location>
        <begin position="51"/>
        <end position="119"/>
    </location>
</feature>
<reference key="1">
    <citation type="journal article" date="2001" name="Science">
        <title>Comparative genomics of Listeria species.</title>
        <authorList>
            <person name="Glaser P."/>
            <person name="Frangeul L."/>
            <person name="Buchrieser C."/>
            <person name="Rusniok C."/>
            <person name="Amend A."/>
            <person name="Baquero F."/>
            <person name="Berche P."/>
            <person name="Bloecker H."/>
            <person name="Brandt P."/>
            <person name="Chakraborty T."/>
            <person name="Charbit A."/>
            <person name="Chetouani F."/>
            <person name="Couve E."/>
            <person name="de Daruvar A."/>
            <person name="Dehoux P."/>
            <person name="Domann E."/>
            <person name="Dominguez-Bernal G."/>
            <person name="Duchaud E."/>
            <person name="Durant L."/>
            <person name="Dussurget O."/>
            <person name="Entian K.-D."/>
            <person name="Fsihi H."/>
            <person name="Garcia-del Portillo F."/>
            <person name="Garrido P."/>
            <person name="Gautier L."/>
            <person name="Goebel W."/>
            <person name="Gomez-Lopez N."/>
            <person name="Hain T."/>
            <person name="Hauf J."/>
            <person name="Jackson D."/>
            <person name="Jones L.-M."/>
            <person name="Kaerst U."/>
            <person name="Kreft J."/>
            <person name="Kuhn M."/>
            <person name="Kunst F."/>
            <person name="Kurapkat G."/>
            <person name="Madueno E."/>
            <person name="Maitournam A."/>
            <person name="Mata Vicente J."/>
            <person name="Ng E."/>
            <person name="Nedjari H."/>
            <person name="Nordsiek G."/>
            <person name="Novella S."/>
            <person name="de Pablos B."/>
            <person name="Perez-Diaz J.-C."/>
            <person name="Purcell R."/>
            <person name="Remmel B."/>
            <person name="Rose M."/>
            <person name="Schlueter T."/>
            <person name="Simoes N."/>
            <person name="Tierrez A."/>
            <person name="Vazquez-Boland J.-A."/>
            <person name="Voss H."/>
            <person name="Wehland J."/>
            <person name="Cossart P."/>
        </authorList>
    </citation>
    <scope>NUCLEOTIDE SEQUENCE [LARGE SCALE GENOMIC DNA]</scope>
    <source>
        <strain>ATCC BAA-679 / EGD-e</strain>
    </source>
</reference>
<comment type="function">
    <text evidence="1">Cell division protein that may be involved in stabilizing or promoting the assembly of the division complex.</text>
</comment>
<comment type="subcellular location">
    <subcellularLocation>
        <location evidence="1">Cell membrane</location>
        <topology evidence="1">Single-pass type II membrane protein</topology>
    </subcellularLocation>
    <text evidence="1">Localizes to the division septum.</text>
</comment>
<comment type="similarity">
    <text evidence="1">Belongs to the FtsQ/DivIB family. DivIB subfamily.</text>
</comment>
<sequence length="270" mass="30497">MAENKRVISIENRIPELKKYRKKKLVRHLAILIGIFVILIAITLYFLSPLSKLDKIAVSGNKQLTENEVRKESGLEIGEFVIGISNGKTEDALKKNTLIKDATVSKEGLNDVQINITEFKTIGYQQQDGKYYDVLESGIMLTDQPRQFPIGNDLLFQNFKNGKTLEKMVDQINKLPKDVVSSISEVIYSPTKSDKNHIKLYMNDGNQVSADISTFAEKMQHYPAIVAQLAKGQKGVIDIEVGSYFQSYYQQNAEKKATEEAAKEKKETNE</sequence>
<organism>
    <name type="scientific">Listeria monocytogenes serovar 1/2a (strain ATCC BAA-679 / EGD-e)</name>
    <dbReference type="NCBI Taxonomy" id="169963"/>
    <lineage>
        <taxon>Bacteria</taxon>
        <taxon>Bacillati</taxon>
        <taxon>Bacillota</taxon>
        <taxon>Bacilli</taxon>
        <taxon>Bacillales</taxon>
        <taxon>Listeriaceae</taxon>
        <taxon>Listeria</taxon>
    </lineage>
</organism>